<feature type="chain" id="PRO_0000416472" description="Ribosome modulation factor 2">
    <location>
        <begin position="1"/>
        <end position="57"/>
    </location>
</feature>
<feature type="region of interest" description="Disordered" evidence="2">
    <location>
        <begin position="1"/>
        <end position="24"/>
    </location>
</feature>
<proteinExistence type="inferred from homology"/>
<comment type="function">
    <text evidence="1">During stationary phase, converts 70S ribosomes to an inactive dimeric form (100S ribosomes).</text>
</comment>
<comment type="subcellular location">
    <subcellularLocation>
        <location evidence="1">Cytoplasm</location>
    </subcellularLocation>
</comment>
<comment type="similarity">
    <text evidence="1">Belongs to the ribosome modulation factor family.</text>
</comment>
<organism>
    <name type="scientific">Colwellia psychrerythraea (strain 34H / ATCC BAA-681)</name>
    <name type="common">Vibrio psychroerythus</name>
    <dbReference type="NCBI Taxonomy" id="167879"/>
    <lineage>
        <taxon>Bacteria</taxon>
        <taxon>Pseudomonadati</taxon>
        <taxon>Pseudomonadota</taxon>
        <taxon>Gammaproteobacteria</taxon>
        <taxon>Alteromonadales</taxon>
        <taxon>Colwelliaceae</taxon>
        <taxon>Colwellia</taxon>
    </lineage>
</organism>
<keyword id="KW-0963">Cytoplasm</keyword>
<keyword id="KW-0810">Translation regulation</keyword>
<sequence length="57" mass="6478">MKRQKRDKLGRAHSNGYQAGLGGKTKEQCPYQNIDAKSQWLGGWRDAISDRNLGLFK</sequence>
<accession>Q47UR1</accession>
<protein>
    <recommendedName>
        <fullName evidence="1">Ribosome modulation factor 2</fullName>
        <shortName evidence="1">RMF 2</shortName>
    </recommendedName>
</protein>
<reference key="1">
    <citation type="journal article" date="2005" name="Proc. Natl. Acad. Sci. U.S.A.">
        <title>The psychrophilic lifestyle as revealed by the genome sequence of Colwellia psychrerythraea 34H through genomic and proteomic analyses.</title>
        <authorList>
            <person name="Methe B.A."/>
            <person name="Nelson K.E."/>
            <person name="Deming J.W."/>
            <person name="Momen B."/>
            <person name="Melamud E."/>
            <person name="Zhang X."/>
            <person name="Moult J."/>
            <person name="Madupu R."/>
            <person name="Nelson W.C."/>
            <person name="Dodson R.J."/>
            <person name="Brinkac L.M."/>
            <person name="Daugherty S.C."/>
            <person name="Durkin A.S."/>
            <person name="DeBoy R.T."/>
            <person name="Kolonay J.F."/>
            <person name="Sullivan S.A."/>
            <person name="Zhou L."/>
            <person name="Davidsen T.M."/>
            <person name="Wu M."/>
            <person name="Huston A.L."/>
            <person name="Lewis M."/>
            <person name="Weaver B."/>
            <person name="Weidman J.F."/>
            <person name="Khouri H."/>
            <person name="Utterback T.R."/>
            <person name="Feldblyum T.V."/>
            <person name="Fraser C.M."/>
        </authorList>
    </citation>
    <scope>NUCLEOTIDE SEQUENCE [LARGE SCALE GENOMIC DNA]</scope>
    <source>
        <strain>34H / ATCC BAA-681</strain>
    </source>
</reference>
<name>RMF2_COLP3</name>
<evidence type="ECO:0000255" key="1">
    <source>
        <dbReference type="HAMAP-Rule" id="MF_00919"/>
    </source>
</evidence>
<evidence type="ECO:0000256" key="2">
    <source>
        <dbReference type="SAM" id="MobiDB-lite"/>
    </source>
</evidence>
<gene>
    <name evidence="1" type="primary">rmf2</name>
    <name type="ordered locus">CPS_4822</name>
</gene>
<dbReference type="EMBL" id="CP000083">
    <property type="protein sequence ID" value="AAZ24798.1"/>
    <property type="molecule type" value="Genomic_DNA"/>
</dbReference>
<dbReference type="SMR" id="Q47UR1"/>
<dbReference type="STRING" id="167879.CPS_4822"/>
<dbReference type="DNASU" id="3518802"/>
<dbReference type="KEGG" id="cps:CPS_4822"/>
<dbReference type="eggNOG" id="COG3130">
    <property type="taxonomic scope" value="Bacteria"/>
</dbReference>
<dbReference type="HOGENOM" id="CLU_203350_0_0_6"/>
<dbReference type="Proteomes" id="UP000000547">
    <property type="component" value="Chromosome"/>
</dbReference>
<dbReference type="GO" id="GO:0005737">
    <property type="term" value="C:cytoplasm"/>
    <property type="evidence" value="ECO:0007669"/>
    <property type="project" value="UniProtKB-SubCell"/>
</dbReference>
<dbReference type="GO" id="GO:0006417">
    <property type="term" value="P:regulation of translation"/>
    <property type="evidence" value="ECO:0007669"/>
    <property type="project" value="UniProtKB-UniRule"/>
</dbReference>
<dbReference type="Gene3D" id="1.10.10.620">
    <property type="entry name" value="ribosome modulation factor like domain"/>
    <property type="match status" value="1"/>
</dbReference>
<dbReference type="HAMAP" id="MF_00919">
    <property type="entry name" value="RMF"/>
    <property type="match status" value="1"/>
</dbReference>
<dbReference type="InterPro" id="IPR007040">
    <property type="entry name" value="Ribosome_modulation_factor"/>
</dbReference>
<dbReference type="InterPro" id="IPR023200">
    <property type="entry name" value="RMF_sf"/>
</dbReference>
<dbReference type="NCBIfam" id="NF011162">
    <property type="entry name" value="PRK14563.1"/>
    <property type="match status" value="1"/>
</dbReference>
<dbReference type="NCBIfam" id="NF041886">
    <property type="entry name" value="Rmf_CrpP_fam"/>
    <property type="match status" value="1"/>
</dbReference>
<dbReference type="Pfam" id="PF04957">
    <property type="entry name" value="RMF"/>
    <property type="match status" value="1"/>
</dbReference>